<sequence>MASQGTKRSYEQMETGGERQNATEIRASVGRMIGGIGRFYIQMCTELKLSDYEGRLIQNSITIERMVLSAFDERRNKYLEEHPSAGKDPKKTGGPIYRRIDGKWIRELILYDKEEIRRIWRQANNGEDTTAGLTHMMIWHSNLNDATYQRTRALVRTGMDPRMCSLMQGSTLPRRSGAAGAAVKGVGTVVMELIRMIKRGINDRNFWRGENGRRTRIAYERMCNILKGKFQTAAQRAMMDQVRESRNPGNAEIEDLIFLARSALILRGSVAHKSCLPACVYGLAVASGHDFEREGYSLVGIDPFRLLQNSQVFSLIRPNENPAHKSQLVWMACHSAAFEDLRVSSFIRGKRVVPRGQLSTRGVQIASNENMETMDSSTLELRSRYWAIRTRSGGNTNQQRASAGQISVQPTFSVQRNLPFERATVMAAFTGNTEGRTSDMRTEIIRIMESARPEDVSFQGRGVFELSDEKATSPIVPSFDMSNEGSYFFGDNAEEYDN</sequence>
<reference key="1">
    <citation type="journal article" date="1990" name="J. Virol.">
        <title>Evolution of the nucleoprotein gene of influenza A virus.</title>
        <authorList>
            <person name="Gorman O.T."/>
            <person name="Bean W.J."/>
            <person name="Kawaoka Y."/>
            <person name="Webster R.G."/>
        </authorList>
    </citation>
    <scope>NUCLEOTIDE SEQUENCE [GENOMIC RNA]</scope>
</reference>
<reference key="2">
    <citation type="submission" date="1990-07" db="EMBL/GenBank/DDBJ databases">
        <authorList>
            <person name="Gorman O.T."/>
        </authorList>
    </citation>
    <scope>SEQUENCE REVISION TO 289</scope>
</reference>
<evidence type="ECO:0000255" key="1">
    <source>
        <dbReference type="HAMAP-Rule" id="MF_04070"/>
    </source>
</evidence>
<evidence type="ECO:0000256" key="2">
    <source>
        <dbReference type="SAM" id="MobiDB-lite"/>
    </source>
</evidence>
<organism>
    <name type="scientific">Influenza A virus (strain A/Swine/Iowa/15/1930 H1N1)</name>
    <dbReference type="NCBI Taxonomy" id="380342"/>
    <lineage>
        <taxon>Viruses</taxon>
        <taxon>Riboviria</taxon>
        <taxon>Orthornavirae</taxon>
        <taxon>Negarnaviricota</taxon>
        <taxon>Polyploviricotina</taxon>
        <taxon>Insthoviricetes</taxon>
        <taxon>Articulavirales</taxon>
        <taxon>Orthomyxoviridae</taxon>
        <taxon>Alphainfluenzavirus</taxon>
        <taxon>Alphainfluenzavirus influenzae</taxon>
        <taxon>Influenza A virus</taxon>
    </lineage>
</organism>
<keyword id="KW-0167">Capsid protein</keyword>
<keyword id="KW-1139">Helical capsid protein</keyword>
<keyword id="KW-1048">Host nucleus</keyword>
<keyword id="KW-0945">Host-virus interaction</keyword>
<keyword id="KW-0687">Ribonucleoprotein</keyword>
<keyword id="KW-0694">RNA-binding</keyword>
<keyword id="KW-0543">Viral nucleoprotein</keyword>
<keyword id="KW-1163">Viral penetration into host nucleus</keyword>
<keyword id="KW-0946">Virion</keyword>
<keyword id="KW-1160">Virus entry into host cell</keyword>
<name>NCAP_I30A0</name>
<accession>P15677</accession>
<comment type="function">
    <text evidence="1">Encapsidates the negative strand viral RNA, protecting it from nucleases. The encapsidated genomic RNA is termed the ribonucleoprotein (RNP) and serves as template for transcription and replication. The RNP needs to be localized in the host nucleus to start an infectious cycle, but is too large to diffuse through the nuclear pore complex. NP comprises at least 2 nuclear localization signals that are responsible for the active RNP import into the nucleus through cellular importin alpha/beta pathway. Later in the infection, nclear export of RNPs are mediated through viral proteins NEP interacting with M1 which binds nucleoproteins. It is possible that nucleoprotein binds directly host exportin-1/XPO1 and plays an active role in RNPs nuclear export. M1 interaction with RNP seems to hide nucleoprotein's nuclear localization signals. Soon after a virion infects a new cell, M1 dissociates from the RNP under acidification of the virion driven by M2 protein. Dissociation of M1 from RNP unmasks nucleoprotein's nuclear localization signals, targeting the RNP to the nucleus.</text>
</comment>
<comment type="subunit">
    <text evidence="1">Homomultimerizes to form the nucleocapsid. May bind host exportin-1/XPO1. Binds to viral genomic RNA. Protein-RNA contacts are mediated by a combination of electrostatic interactions between positively charged residues and the phosphate backbone and planar interactions between aromatic side chains and bases.</text>
</comment>
<comment type="subcellular location">
    <subcellularLocation>
        <location evidence="1">Virion</location>
    </subcellularLocation>
    <subcellularLocation>
        <location evidence="1">Host nucleus</location>
    </subcellularLocation>
</comment>
<comment type="PTM">
    <text evidence="1">Late in virus-infected cells, may be cleaved from a 56-kDa protein to a 53-kDa protein by a cellular caspase. This cleavage might be a marker for the onset of apoptosis in infected cells or have a specific function in virus host interaction.</text>
</comment>
<comment type="similarity">
    <text evidence="1">Belongs to the influenza viruses nucleoprotein family.</text>
</comment>
<dbReference type="EMBL" id="M30747">
    <property type="protein sequence ID" value="AAA43453.1"/>
    <property type="molecule type" value="Genomic_RNA"/>
</dbReference>
<dbReference type="SMR" id="P15677"/>
<dbReference type="GO" id="GO:0019029">
    <property type="term" value="C:helical viral capsid"/>
    <property type="evidence" value="ECO:0007669"/>
    <property type="project" value="UniProtKB-UniRule"/>
</dbReference>
<dbReference type="GO" id="GO:0043657">
    <property type="term" value="C:host cell"/>
    <property type="evidence" value="ECO:0007669"/>
    <property type="project" value="GOC"/>
</dbReference>
<dbReference type="GO" id="GO:0042025">
    <property type="term" value="C:host cell nucleus"/>
    <property type="evidence" value="ECO:0007669"/>
    <property type="project" value="UniProtKB-SubCell"/>
</dbReference>
<dbReference type="GO" id="GO:1990904">
    <property type="term" value="C:ribonucleoprotein complex"/>
    <property type="evidence" value="ECO:0007669"/>
    <property type="project" value="UniProtKB-KW"/>
</dbReference>
<dbReference type="GO" id="GO:0019013">
    <property type="term" value="C:viral nucleocapsid"/>
    <property type="evidence" value="ECO:0007669"/>
    <property type="project" value="UniProtKB-UniRule"/>
</dbReference>
<dbReference type="GO" id="GO:0003723">
    <property type="term" value="F:RNA binding"/>
    <property type="evidence" value="ECO:0007669"/>
    <property type="project" value="UniProtKB-UniRule"/>
</dbReference>
<dbReference type="GO" id="GO:0005198">
    <property type="term" value="F:structural molecule activity"/>
    <property type="evidence" value="ECO:0007669"/>
    <property type="project" value="UniProtKB-UniRule"/>
</dbReference>
<dbReference type="GO" id="GO:0046718">
    <property type="term" value="P:symbiont entry into host cell"/>
    <property type="evidence" value="ECO:0007669"/>
    <property type="project" value="UniProtKB-KW"/>
</dbReference>
<dbReference type="GO" id="GO:0075732">
    <property type="term" value="P:viral penetration into host nucleus"/>
    <property type="evidence" value="ECO:0007669"/>
    <property type="project" value="UniProtKB-UniRule"/>
</dbReference>
<dbReference type="HAMAP" id="MF_04070">
    <property type="entry name" value="INFV_NCAP"/>
    <property type="match status" value="1"/>
</dbReference>
<dbReference type="InterPro" id="IPR002141">
    <property type="entry name" value="Flu_NP"/>
</dbReference>
<dbReference type="Pfam" id="PF00506">
    <property type="entry name" value="Flu_NP"/>
    <property type="match status" value="1"/>
</dbReference>
<dbReference type="SUPFAM" id="SSF161003">
    <property type="entry name" value="flu NP-like"/>
    <property type="match status" value="1"/>
</dbReference>
<proteinExistence type="inferred from homology"/>
<organismHost>
    <name type="scientific">Aves</name>
    <dbReference type="NCBI Taxonomy" id="8782"/>
</organismHost>
<organismHost>
    <name type="scientific">Homo sapiens</name>
    <name type="common">Human</name>
    <dbReference type="NCBI Taxonomy" id="9606"/>
</organismHost>
<organismHost>
    <name type="scientific">Sus scrofa</name>
    <name type="common">Pig</name>
    <dbReference type="NCBI Taxonomy" id="9823"/>
</organismHost>
<feature type="chain" id="PRO_0000079123" description="Nucleoprotein">
    <location>
        <begin position="1"/>
        <end position="498"/>
    </location>
</feature>
<feature type="region of interest" description="Disordered" evidence="2">
    <location>
        <begin position="1"/>
        <end position="21"/>
    </location>
</feature>
<feature type="short sequence motif" description="Unconventional nuclear localization signal" evidence="1">
    <location>
        <begin position="1"/>
        <end position="18"/>
    </location>
</feature>
<feature type="short sequence motif" description="Bipartite nuclear localization signal" evidence="1">
    <location>
        <begin position="198"/>
        <end position="216"/>
    </location>
</feature>
<gene>
    <name evidence="1" type="primary">NP</name>
</gene>
<protein>
    <recommendedName>
        <fullName evidence="1">Nucleoprotein</fullName>
    </recommendedName>
    <alternativeName>
        <fullName evidence="1">Nucleocapsid protein</fullName>
        <shortName evidence="1">Protein N</shortName>
    </alternativeName>
</protein>